<proteinExistence type="evidence at transcript level"/>
<accession>Q6NZT6</accession>
<accession>B8JMF1</accession>
<accession>Q7ZV30</accession>
<gene>
    <name type="primary">irf2bp2a</name>
    <name type="ORF">si:ch1073-404g22.1</name>
    <name type="ORF">zgc:56251</name>
</gene>
<keyword id="KW-0479">Metal-binding</keyword>
<keyword id="KW-0539">Nucleus</keyword>
<keyword id="KW-1185">Reference proteome</keyword>
<keyword id="KW-0678">Repressor</keyword>
<keyword id="KW-0804">Transcription</keyword>
<keyword id="KW-0805">Transcription regulation</keyword>
<keyword id="KW-0862">Zinc</keyword>
<keyword id="KW-0863">Zinc-finger</keyword>
<reference key="1">
    <citation type="journal article" date="2013" name="Nature">
        <title>The zebrafish reference genome sequence and its relationship to the human genome.</title>
        <authorList>
            <person name="Howe K."/>
            <person name="Clark M.D."/>
            <person name="Torroja C.F."/>
            <person name="Torrance J."/>
            <person name="Berthelot C."/>
            <person name="Muffato M."/>
            <person name="Collins J.E."/>
            <person name="Humphray S."/>
            <person name="McLaren K."/>
            <person name="Matthews L."/>
            <person name="McLaren S."/>
            <person name="Sealy I."/>
            <person name="Caccamo M."/>
            <person name="Churcher C."/>
            <person name="Scott C."/>
            <person name="Barrett J.C."/>
            <person name="Koch R."/>
            <person name="Rauch G.J."/>
            <person name="White S."/>
            <person name="Chow W."/>
            <person name="Kilian B."/>
            <person name="Quintais L.T."/>
            <person name="Guerra-Assuncao J.A."/>
            <person name="Zhou Y."/>
            <person name="Gu Y."/>
            <person name="Yen J."/>
            <person name="Vogel J.H."/>
            <person name="Eyre T."/>
            <person name="Redmond S."/>
            <person name="Banerjee R."/>
            <person name="Chi J."/>
            <person name="Fu B."/>
            <person name="Langley E."/>
            <person name="Maguire S.F."/>
            <person name="Laird G.K."/>
            <person name="Lloyd D."/>
            <person name="Kenyon E."/>
            <person name="Donaldson S."/>
            <person name="Sehra H."/>
            <person name="Almeida-King J."/>
            <person name="Loveland J."/>
            <person name="Trevanion S."/>
            <person name="Jones M."/>
            <person name="Quail M."/>
            <person name="Willey D."/>
            <person name="Hunt A."/>
            <person name="Burton J."/>
            <person name="Sims S."/>
            <person name="McLay K."/>
            <person name="Plumb B."/>
            <person name="Davis J."/>
            <person name="Clee C."/>
            <person name="Oliver K."/>
            <person name="Clark R."/>
            <person name="Riddle C."/>
            <person name="Elliot D."/>
            <person name="Threadgold G."/>
            <person name="Harden G."/>
            <person name="Ware D."/>
            <person name="Begum S."/>
            <person name="Mortimore B."/>
            <person name="Kerry G."/>
            <person name="Heath P."/>
            <person name="Phillimore B."/>
            <person name="Tracey A."/>
            <person name="Corby N."/>
            <person name="Dunn M."/>
            <person name="Johnson C."/>
            <person name="Wood J."/>
            <person name="Clark S."/>
            <person name="Pelan S."/>
            <person name="Griffiths G."/>
            <person name="Smith M."/>
            <person name="Glithero R."/>
            <person name="Howden P."/>
            <person name="Barker N."/>
            <person name="Lloyd C."/>
            <person name="Stevens C."/>
            <person name="Harley J."/>
            <person name="Holt K."/>
            <person name="Panagiotidis G."/>
            <person name="Lovell J."/>
            <person name="Beasley H."/>
            <person name="Henderson C."/>
            <person name="Gordon D."/>
            <person name="Auger K."/>
            <person name="Wright D."/>
            <person name="Collins J."/>
            <person name="Raisen C."/>
            <person name="Dyer L."/>
            <person name="Leung K."/>
            <person name="Robertson L."/>
            <person name="Ambridge K."/>
            <person name="Leongamornlert D."/>
            <person name="McGuire S."/>
            <person name="Gilderthorp R."/>
            <person name="Griffiths C."/>
            <person name="Manthravadi D."/>
            <person name="Nichol S."/>
            <person name="Barker G."/>
            <person name="Whitehead S."/>
            <person name="Kay M."/>
            <person name="Brown J."/>
            <person name="Murnane C."/>
            <person name="Gray E."/>
            <person name="Humphries M."/>
            <person name="Sycamore N."/>
            <person name="Barker D."/>
            <person name="Saunders D."/>
            <person name="Wallis J."/>
            <person name="Babbage A."/>
            <person name="Hammond S."/>
            <person name="Mashreghi-Mohammadi M."/>
            <person name="Barr L."/>
            <person name="Martin S."/>
            <person name="Wray P."/>
            <person name="Ellington A."/>
            <person name="Matthews N."/>
            <person name="Ellwood M."/>
            <person name="Woodmansey R."/>
            <person name="Clark G."/>
            <person name="Cooper J."/>
            <person name="Tromans A."/>
            <person name="Grafham D."/>
            <person name="Skuce C."/>
            <person name="Pandian R."/>
            <person name="Andrews R."/>
            <person name="Harrison E."/>
            <person name="Kimberley A."/>
            <person name="Garnett J."/>
            <person name="Fosker N."/>
            <person name="Hall R."/>
            <person name="Garner P."/>
            <person name="Kelly D."/>
            <person name="Bird C."/>
            <person name="Palmer S."/>
            <person name="Gehring I."/>
            <person name="Berger A."/>
            <person name="Dooley C.M."/>
            <person name="Ersan-Urun Z."/>
            <person name="Eser C."/>
            <person name="Geiger H."/>
            <person name="Geisler M."/>
            <person name="Karotki L."/>
            <person name="Kirn A."/>
            <person name="Konantz J."/>
            <person name="Konantz M."/>
            <person name="Oberlander M."/>
            <person name="Rudolph-Geiger S."/>
            <person name="Teucke M."/>
            <person name="Lanz C."/>
            <person name="Raddatz G."/>
            <person name="Osoegawa K."/>
            <person name="Zhu B."/>
            <person name="Rapp A."/>
            <person name="Widaa S."/>
            <person name="Langford C."/>
            <person name="Yang F."/>
            <person name="Schuster S.C."/>
            <person name="Carter N.P."/>
            <person name="Harrow J."/>
            <person name="Ning Z."/>
            <person name="Herrero J."/>
            <person name="Searle S.M."/>
            <person name="Enright A."/>
            <person name="Geisler R."/>
            <person name="Plasterk R.H."/>
            <person name="Lee C."/>
            <person name="Westerfield M."/>
            <person name="de Jong P.J."/>
            <person name="Zon L.I."/>
            <person name="Postlethwait J.H."/>
            <person name="Nusslein-Volhard C."/>
            <person name="Hubbard T.J."/>
            <person name="Roest Crollius H."/>
            <person name="Rogers J."/>
            <person name="Stemple D.L."/>
        </authorList>
    </citation>
    <scope>NUCLEOTIDE SEQUENCE [LARGE SCALE GENOMIC DNA]</scope>
    <source>
        <strain>Tuebingen</strain>
    </source>
</reference>
<reference key="2">
    <citation type="submission" date="2004-02" db="EMBL/GenBank/DDBJ databases">
        <authorList>
            <consortium name="NIH - Zebrafish Gene Collection (ZGC) project"/>
        </authorList>
    </citation>
    <scope>NUCLEOTIDE SEQUENCE [LARGE SCALE MRNA]</scope>
    <source>
        <strain>SJD</strain>
        <tissue>Embryo</tissue>
    </source>
</reference>
<organism>
    <name type="scientific">Danio rerio</name>
    <name type="common">Zebrafish</name>
    <name type="synonym">Brachydanio rerio</name>
    <dbReference type="NCBI Taxonomy" id="7955"/>
    <lineage>
        <taxon>Eukaryota</taxon>
        <taxon>Metazoa</taxon>
        <taxon>Chordata</taxon>
        <taxon>Craniata</taxon>
        <taxon>Vertebrata</taxon>
        <taxon>Euteleostomi</taxon>
        <taxon>Actinopterygii</taxon>
        <taxon>Neopterygii</taxon>
        <taxon>Teleostei</taxon>
        <taxon>Ostariophysi</taxon>
        <taxon>Cypriniformes</taxon>
        <taxon>Danionidae</taxon>
        <taxon>Danioninae</taxon>
        <taxon>Danio</taxon>
    </lineage>
</organism>
<dbReference type="EMBL" id="CR854915">
    <property type="status" value="NOT_ANNOTATED_CDS"/>
    <property type="molecule type" value="Genomic_DNA"/>
</dbReference>
<dbReference type="EMBL" id="CU633825">
    <property type="protein sequence ID" value="CAX13278.1"/>
    <property type="status" value="ALT_SEQ"/>
    <property type="molecule type" value="Genomic_DNA"/>
</dbReference>
<dbReference type="EMBL" id="BC046025">
    <property type="protein sequence ID" value="AAH46025.1"/>
    <property type="molecule type" value="mRNA"/>
</dbReference>
<dbReference type="EMBL" id="BC065975">
    <property type="protein sequence ID" value="AAH65975.1"/>
    <property type="molecule type" value="mRNA"/>
</dbReference>
<dbReference type="RefSeq" id="NP_956275.1">
    <property type="nucleotide sequence ID" value="NM_199981.1"/>
</dbReference>
<dbReference type="SMR" id="Q6NZT6"/>
<dbReference type="FunCoup" id="Q6NZT6">
    <property type="interactions" value="1401"/>
</dbReference>
<dbReference type="STRING" id="7955.ENSDARP00000117801"/>
<dbReference type="PaxDb" id="7955-ENSDARP00000117801"/>
<dbReference type="GeneID" id="335866"/>
<dbReference type="KEGG" id="dre:335866"/>
<dbReference type="AGR" id="ZFIN:ZDB-GENE-030131-7809"/>
<dbReference type="CTD" id="335866"/>
<dbReference type="ZFIN" id="ZDB-GENE-030131-7809">
    <property type="gene designation" value="irf2bp2a"/>
</dbReference>
<dbReference type="eggNOG" id="KOG3579">
    <property type="taxonomic scope" value="Eukaryota"/>
</dbReference>
<dbReference type="InParanoid" id="Q6NZT6"/>
<dbReference type="OrthoDB" id="45007at2759"/>
<dbReference type="PhylomeDB" id="Q6NZT6"/>
<dbReference type="TreeFam" id="TF317075"/>
<dbReference type="PRO" id="PR:Q6NZT6"/>
<dbReference type="Proteomes" id="UP000000437">
    <property type="component" value="Chromosome 13"/>
</dbReference>
<dbReference type="GO" id="GO:0005634">
    <property type="term" value="C:nucleus"/>
    <property type="evidence" value="ECO:0000318"/>
    <property type="project" value="GO_Central"/>
</dbReference>
<dbReference type="GO" id="GO:0003714">
    <property type="term" value="F:transcription corepressor activity"/>
    <property type="evidence" value="ECO:0000318"/>
    <property type="project" value="GO_Central"/>
</dbReference>
<dbReference type="GO" id="GO:0008270">
    <property type="term" value="F:zinc ion binding"/>
    <property type="evidence" value="ECO:0007669"/>
    <property type="project" value="UniProtKB-KW"/>
</dbReference>
<dbReference type="GO" id="GO:0001889">
    <property type="term" value="P:liver development"/>
    <property type="evidence" value="ECO:0000315"/>
    <property type="project" value="ZFIN"/>
</dbReference>
<dbReference type="GO" id="GO:0030223">
    <property type="term" value="P:neutrophil differentiation"/>
    <property type="evidence" value="ECO:0000315"/>
    <property type="project" value="ZFIN"/>
</dbReference>
<dbReference type="GO" id="GO:0006357">
    <property type="term" value="P:regulation of transcription by RNA polymerase II"/>
    <property type="evidence" value="ECO:0000318"/>
    <property type="project" value="GO_Central"/>
</dbReference>
<dbReference type="CDD" id="cd16716">
    <property type="entry name" value="vRING-HC_IRF2BP2"/>
    <property type="match status" value="1"/>
</dbReference>
<dbReference type="FunFam" id="1.10.10.1580:FF:000001">
    <property type="entry name" value="interferon regulatory factor 2-binding protein 2"/>
    <property type="match status" value="1"/>
</dbReference>
<dbReference type="Gene3D" id="1.10.10.1580">
    <property type="entry name" value="Interferon regulatory factor 2-binding protein"/>
    <property type="match status" value="1"/>
</dbReference>
<dbReference type="InterPro" id="IPR044882">
    <property type="entry name" value="I2BP1/2_C3HC4-RING_sf"/>
</dbReference>
<dbReference type="InterPro" id="IPR022750">
    <property type="entry name" value="Interferon_reg_fac2-bd1_2_Znf"/>
</dbReference>
<dbReference type="PANTHER" id="PTHR10816:SF18">
    <property type="entry name" value="INTERFERON REGULATORY FACTOR 2-BINDING PROTEIN 2"/>
    <property type="match status" value="1"/>
</dbReference>
<dbReference type="PANTHER" id="PTHR10816">
    <property type="entry name" value="MYELIN TRANSCRIPTION FACTOR 1-RELATED"/>
    <property type="match status" value="1"/>
</dbReference>
<dbReference type="Pfam" id="PF11261">
    <property type="entry name" value="IRF-2BP1_2"/>
    <property type="match status" value="1"/>
</dbReference>
<dbReference type="Pfam" id="PF25454">
    <property type="entry name" value="zf-C3HC4_IRF-2BP1_2"/>
    <property type="match status" value="1"/>
</dbReference>
<dbReference type="SUPFAM" id="SSF57850">
    <property type="entry name" value="RING/U-box"/>
    <property type="match status" value="1"/>
</dbReference>
<name>I2B2A_DANRE</name>
<evidence type="ECO:0000250" key="1"/>
<evidence type="ECO:0000256" key="2">
    <source>
        <dbReference type="SAM" id="MobiDB-lite"/>
    </source>
</evidence>
<evidence type="ECO:0000305" key="3"/>
<protein>
    <recommendedName>
        <fullName>Interferon regulatory factor 2-binding protein 2-A</fullName>
        <shortName>IRF-2-binding protein 2-A</shortName>
        <shortName>IRF-2BP2-A</shortName>
    </recommendedName>
</protein>
<sequence length="491" mass="52888">MSSAAVAASRRQSCYLCDLPRMPWAMIWDFTEPVCRGCVNYEGADRIEFVIETARQLKRAHGFQDGRPAGPGKQLPGKEIHASGDPGSRPPQPLDRYPLSSERPPRLGAEYQSARQANGIPVPNGFSKPDDPPELNRQSPNPRRTSGVPPNLVPLVNGSMAHAMNGRPGQMSDLGGNKRPASVSSTEHDKDKHRPDSLTPEISDGHKTRADDWLNKNKTVRELMTLNPYDGRFKKEHMQQRVMYETGPASKSDRGKHPKNLKRKASPEPDGEGTAGKINGDGQQWLPSASGDGLKMPPVPPPSFTSPPSTISPHPRTTPPEAGAAAAATQNGHSPIAALILAADNAGGNSSPKDANQVHSTTRRNSNSPLSPNQRRLAQGAGTPHVPGMDAVHPQSIPDSSVPSSIPLCCTLCHERLEDTHFVQCPSVPSHKFCFPCSRESIKQQGATGEVYCPSGEKCPLVGSNVPWAFMQGEIATILAGDVKVKKERDP</sequence>
<feature type="chain" id="PRO_0000328736" description="Interferon regulatory factor 2-binding protein 2-A">
    <location>
        <begin position="1"/>
        <end position="491"/>
    </location>
</feature>
<feature type="zinc finger region" description="RING-type; degenerate">
    <location>
        <begin position="410"/>
        <end position="457"/>
    </location>
</feature>
<feature type="region of interest" description="Disordered" evidence="2">
    <location>
        <begin position="60"/>
        <end position="213"/>
    </location>
</feature>
<feature type="region of interest" description="Disordered" evidence="2">
    <location>
        <begin position="245"/>
        <end position="330"/>
    </location>
</feature>
<feature type="region of interest" description="Disordered" evidence="2">
    <location>
        <begin position="345"/>
        <end position="399"/>
    </location>
</feature>
<feature type="region of interest" description="Cys-rich">
    <location>
        <begin position="410"/>
        <end position="457"/>
    </location>
</feature>
<feature type="compositionally biased region" description="Basic and acidic residues" evidence="2">
    <location>
        <begin position="186"/>
        <end position="196"/>
    </location>
</feature>
<feature type="compositionally biased region" description="Basic and acidic residues" evidence="2">
    <location>
        <begin position="203"/>
        <end position="213"/>
    </location>
</feature>
<feature type="compositionally biased region" description="Basic residues" evidence="2">
    <location>
        <begin position="254"/>
        <end position="264"/>
    </location>
</feature>
<feature type="compositionally biased region" description="Low complexity" evidence="2">
    <location>
        <begin position="306"/>
        <end position="328"/>
    </location>
</feature>
<feature type="compositionally biased region" description="Polar residues" evidence="2">
    <location>
        <begin position="347"/>
        <end position="376"/>
    </location>
</feature>
<feature type="sequence conflict" description="In Ref. 2; AAH46025." evidence="3" ref="2">
    <original>S</original>
    <variation>P</variation>
    <location>
        <position position="9"/>
    </location>
</feature>
<feature type="sequence conflict" description="In Ref. 2; AAH46025." evidence="3" ref="2">
    <original>Q</original>
    <variation>H</variation>
    <location>
        <position position="239"/>
    </location>
</feature>
<comment type="function">
    <text evidence="1">Acts as a transcriptional repressor.</text>
</comment>
<comment type="subcellular location">
    <subcellularLocation>
        <location evidence="1">Nucleus</location>
    </subcellularLocation>
</comment>
<comment type="similarity">
    <text evidence="3">Belongs to the IRF2BP family.</text>
</comment>
<comment type="sequence caution" evidence="3">
    <conflict type="erroneous gene model prediction">
        <sequence resource="EMBL-CDS" id="CAX13278"/>
    </conflict>
</comment>